<evidence type="ECO:0000255" key="1">
    <source>
        <dbReference type="HAMAP-Rule" id="MF_01102"/>
    </source>
</evidence>
<reference key="1">
    <citation type="submission" date="2007-02" db="EMBL/GenBank/DDBJ databases">
        <title>Complete sequence of chromosome of Yersinia pestis Pestoides F.</title>
        <authorList>
            <consortium name="US DOE Joint Genome Institute"/>
            <person name="Copeland A."/>
            <person name="Lucas S."/>
            <person name="Lapidus A."/>
            <person name="Barry K."/>
            <person name="Detter J.C."/>
            <person name="Glavina del Rio T."/>
            <person name="Hammon N."/>
            <person name="Israni S."/>
            <person name="Dalin E."/>
            <person name="Tice H."/>
            <person name="Pitluck S."/>
            <person name="Di Bartolo G."/>
            <person name="Chain P."/>
            <person name="Malfatti S."/>
            <person name="Shin M."/>
            <person name="Vergez L."/>
            <person name="Schmutz J."/>
            <person name="Larimer F."/>
            <person name="Land M."/>
            <person name="Hauser L."/>
            <person name="Worsham P."/>
            <person name="Chu M."/>
            <person name="Bearden S."/>
            <person name="Garcia E."/>
            <person name="Richardson P."/>
        </authorList>
    </citation>
    <scope>NUCLEOTIDE SEQUENCE [LARGE SCALE GENOMIC DNA]</scope>
    <source>
        <strain>Pestoides F</strain>
    </source>
</reference>
<feature type="chain" id="PRO_1000065017" description="tRNA 5-methylaminomethyl-2-thiouridine biosynthesis bifunctional protein MnmC">
    <location>
        <begin position="1"/>
        <end position="689"/>
    </location>
</feature>
<feature type="region of interest" description="tRNA (mnm(5)s(2)U34)-methyltransferase">
    <location>
        <begin position="1"/>
        <end position="245"/>
    </location>
</feature>
<feature type="region of interest" description="FAD-dependent cmnm(5)s(2)U34 oxidoreductase">
    <location>
        <begin position="270"/>
        <end position="689"/>
    </location>
</feature>
<keyword id="KW-0963">Cytoplasm</keyword>
<keyword id="KW-0274">FAD</keyword>
<keyword id="KW-0285">Flavoprotein</keyword>
<keyword id="KW-0489">Methyltransferase</keyword>
<keyword id="KW-0511">Multifunctional enzyme</keyword>
<keyword id="KW-0560">Oxidoreductase</keyword>
<keyword id="KW-0949">S-adenosyl-L-methionine</keyword>
<keyword id="KW-0808">Transferase</keyword>
<keyword id="KW-0819">tRNA processing</keyword>
<accession>A4TM73</accession>
<organism>
    <name type="scientific">Yersinia pestis (strain Pestoides F)</name>
    <dbReference type="NCBI Taxonomy" id="386656"/>
    <lineage>
        <taxon>Bacteria</taxon>
        <taxon>Pseudomonadati</taxon>
        <taxon>Pseudomonadota</taxon>
        <taxon>Gammaproteobacteria</taxon>
        <taxon>Enterobacterales</taxon>
        <taxon>Yersiniaceae</taxon>
        <taxon>Yersinia</taxon>
    </lineage>
</organism>
<proteinExistence type="inferred from homology"/>
<name>MNMC_YERPP</name>
<protein>
    <recommendedName>
        <fullName evidence="1">tRNA 5-methylaminomethyl-2-thiouridine biosynthesis bifunctional protein MnmC</fullName>
        <shortName evidence="1">tRNA mnm(5)s(2)U biosynthesis bifunctional protein</shortName>
    </recommendedName>
    <domain>
        <recommendedName>
            <fullName evidence="1">tRNA (mnm(5)s(2)U34)-methyltransferase</fullName>
            <ecNumber evidence="1">2.1.1.61</ecNumber>
        </recommendedName>
    </domain>
    <domain>
        <recommendedName>
            <fullName evidence="1">FAD-dependent cmnm(5)s(2)U34 oxidoreductase</fullName>
            <ecNumber evidence="1">1.5.-.-</ecNumber>
        </recommendedName>
    </domain>
</protein>
<comment type="function">
    <text evidence="1">Catalyzes the last two steps in the biosynthesis of 5-methylaminomethyl-2-thiouridine (mnm(5)s(2)U) at the wobble position (U34) in tRNA. Catalyzes the FAD-dependent demodification of cmnm(5)s(2)U34 to nm(5)s(2)U34, followed by the transfer of a methyl group from S-adenosyl-L-methionine to nm(5)s(2)U34, to form mnm(5)s(2)U34.</text>
</comment>
<comment type="catalytic activity">
    <reaction evidence="1">
        <text>5-aminomethyl-2-thiouridine(34) in tRNA + S-adenosyl-L-methionine = 5-methylaminomethyl-2-thiouridine(34) in tRNA + S-adenosyl-L-homocysteine + H(+)</text>
        <dbReference type="Rhea" id="RHEA:19569"/>
        <dbReference type="Rhea" id="RHEA-COMP:10195"/>
        <dbReference type="Rhea" id="RHEA-COMP:10197"/>
        <dbReference type="ChEBI" id="CHEBI:15378"/>
        <dbReference type="ChEBI" id="CHEBI:57856"/>
        <dbReference type="ChEBI" id="CHEBI:59789"/>
        <dbReference type="ChEBI" id="CHEBI:74454"/>
        <dbReference type="ChEBI" id="CHEBI:74455"/>
        <dbReference type="EC" id="2.1.1.61"/>
    </reaction>
</comment>
<comment type="cofactor">
    <cofactor evidence="1">
        <name>FAD</name>
        <dbReference type="ChEBI" id="CHEBI:57692"/>
    </cofactor>
</comment>
<comment type="subcellular location">
    <subcellularLocation>
        <location evidence="1">Cytoplasm</location>
    </subcellularLocation>
</comment>
<comment type="similarity">
    <text evidence="1">In the N-terminal section; belongs to the methyltransferase superfamily. tRNA (mnm(5)s(2)U34)-methyltransferase family.</text>
</comment>
<comment type="similarity">
    <text evidence="1">In the C-terminal section; belongs to the DAO family.</text>
</comment>
<sequence length="689" mass="76671">MNQRPIQTATLSWNEQGTPVSEQFGDIYFSNEDGLEETHHVFLKGNGFPARFASHPQQSCIFAETGFGTGLNFLTLWRDFALFRQQSPNATLRRLHYISFEKYPLHVADLASAHARWPELASFAEQLRAQWPLPLAGCHRILLADGAITLDLWFGDVNTLLPTLDDSLNNQVDAWFLDGFAPAKNPDMWNEQLFNAMARMTRPGGTFSTFTAAGFVRRGLQQAGFNVTKVKGFGQKREMLTGTLPQQIHAPTAPWYHRPAATRCDDIAIIGGGIVSALTALALQRRGAVVTLYCADAQPAQGASGNRQGALYPLLNGKNDALETFFTSAFTFARRQYDQLLEQGIAFDHQWCGVSQLAFDDKSRGKIEKMLHTQWPVEFAEAMSREQLSELAGLDCAHDGIHYPAGGWLCPSDLTHALMMLAQQNGMTCHYQHELQRLKRIDSQWQLTFGQSQAAKHHATVILATGHRLPEWEQTHHLPLSAVRGQVSHIPTTPVLSQLQQVLCYDGYLTPVNPANQHHCIGASYQRGDIATDFRLTEQQENRERLLRCLPQVSWPQQVDVSDNQARCGVRCAIRDHLPMVGAVPDYAATLAQYQDLSRRIQHGGESEVNDIAVAPVWPELFMVGGLGSRGLCSAPLVAEILAAQMFGEPLPLDAKTLAALNPNRFWIRKLLKGRPVQTRSPATQESSR</sequence>
<dbReference type="EC" id="2.1.1.61" evidence="1"/>
<dbReference type="EC" id="1.5.-.-" evidence="1"/>
<dbReference type="EMBL" id="CP000668">
    <property type="protein sequence ID" value="ABP40385.1"/>
    <property type="molecule type" value="Genomic_DNA"/>
</dbReference>
<dbReference type="RefSeq" id="WP_002209716.1">
    <property type="nucleotide sequence ID" value="NZ_CP009715.1"/>
</dbReference>
<dbReference type="SMR" id="A4TM73"/>
<dbReference type="GeneID" id="57975933"/>
<dbReference type="KEGG" id="ypp:YPDSF_2004"/>
<dbReference type="PATRIC" id="fig|386656.14.peg.3474"/>
<dbReference type="GO" id="GO:0005737">
    <property type="term" value="C:cytoplasm"/>
    <property type="evidence" value="ECO:0007669"/>
    <property type="project" value="UniProtKB-SubCell"/>
</dbReference>
<dbReference type="GO" id="GO:0050660">
    <property type="term" value="F:flavin adenine dinucleotide binding"/>
    <property type="evidence" value="ECO:0007669"/>
    <property type="project" value="UniProtKB-UniRule"/>
</dbReference>
<dbReference type="GO" id="GO:0016645">
    <property type="term" value="F:oxidoreductase activity, acting on the CH-NH group of donors"/>
    <property type="evidence" value="ECO:0007669"/>
    <property type="project" value="InterPro"/>
</dbReference>
<dbReference type="GO" id="GO:0004808">
    <property type="term" value="F:tRNA (5-methylaminomethyl-2-thiouridylate)(34)-methyltransferase activity"/>
    <property type="evidence" value="ECO:0007669"/>
    <property type="project" value="UniProtKB-EC"/>
</dbReference>
<dbReference type="GO" id="GO:0032259">
    <property type="term" value="P:methylation"/>
    <property type="evidence" value="ECO:0007669"/>
    <property type="project" value="UniProtKB-KW"/>
</dbReference>
<dbReference type="GO" id="GO:0002098">
    <property type="term" value="P:tRNA wobble uridine modification"/>
    <property type="evidence" value="ECO:0007669"/>
    <property type="project" value="TreeGrafter"/>
</dbReference>
<dbReference type="FunFam" id="3.40.50.150:FF:000107">
    <property type="entry name" value="tRNA 5-methylaminomethyl-2-thiouridine biosynthesis bifunctional protein MnmC"/>
    <property type="match status" value="1"/>
</dbReference>
<dbReference type="Gene3D" id="3.30.9.10">
    <property type="entry name" value="D-Amino Acid Oxidase, subunit A, domain 2"/>
    <property type="match status" value="1"/>
</dbReference>
<dbReference type="Gene3D" id="3.50.50.60">
    <property type="entry name" value="FAD/NAD(P)-binding domain"/>
    <property type="match status" value="1"/>
</dbReference>
<dbReference type="Gene3D" id="3.40.50.150">
    <property type="entry name" value="Vaccinia Virus protein VP39"/>
    <property type="match status" value="1"/>
</dbReference>
<dbReference type="HAMAP" id="MF_01102">
    <property type="entry name" value="MnmC"/>
    <property type="match status" value="1"/>
</dbReference>
<dbReference type="InterPro" id="IPR006076">
    <property type="entry name" value="FAD-dep_OxRdtase"/>
</dbReference>
<dbReference type="InterPro" id="IPR036188">
    <property type="entry name" value="FAD/NAD-bd_sf"/>
</dbReference>
<dbReference type="InterPro" id="IPR008471">
    <property type="entry name" value="MnmC-like_methylTransf"/>
</dbReference>
<dbReference type="InterPro" id="IPR029063">
    <property type="entry name" value="SAM-dependent_MTases_sf"/>
</dbReference>
<dbReference type="InterPro" id="IPR023032">
    <property type="entry name" value="tRNA_MAMT_biosynth_bifunc_MnmC"/>
</dbReference>
<dbReference type="InterPro" id="IPR047785">
    <property type="entry name" value="tRNA_MNMC2"/>
</dbReference>
<dbReference type="InterPro" id="IPR017610">
    <property type="entry name" value="tRNA_S-uridine_synth_MnmC_C"/>
</dbReference>
<dbReference type="NCBIfam" id="TIGR03197">
    <property type="entry name" value="MnmC_Cterm"/>
    <property type="match status" value="1"/>
</dbReference>
<dbReference type="NCBIfam" id="NF002481">
    <property type="entry name" value="PRK01747.1-2"/>
    <property type="match status" value="1"/>
</dbReference>
<dbReference type="NCBIfam" id="NF002482">
    <property type="entry name" value="PRK01747.1-3"/>
    <property type="match status" value="1"/>
</dbReference>
<dbReference type="NCBIfam" id="NF002484">
    <property type="entry name" value="PRK01747.1-5"/>
    <property type="match status" value="1"/>
</dbReference>
<dbReference type="NCBIfam" id="NF033855">
    <property type="entry name" value="tRNA_MNMC2"/>
    <property type="match status" value="1"/>
</dbReference>
<dbReference type="PANTHER" id="PTHR13847">
    <property type="entry name" value="SARCOSINE DEHYDROGENASE-RELATED"/>
    <property type="match status" value="1"/>
</dbReference>
<dbReference type="PANTHER" id="PTHR13847:SF283">
    <property type="entry name" value="TRNA 5-METHYLAMINOMETHYL-2-THIOURIDINE BIOSYNTHESIS BIFUNCTIONAL PROTEIN MNMC"/>
    <property type="match status" value="1"/>
</dbReference>
<dbReference type="Pfam" id="PF01266">
    <property type="entry name" value="DAO"/>
    <property type="match status" value="1"/>
</dbReference>
<dbReference type="Pfam" id="PF05430">
    <property type="entry name" value="Methyltransf_30"/>
    <property type="match status" value="1"/>
</dbReference>
<dbReference type="SUPFAM" id="SSF51905">
    <property type="entry name" value="FAD/NAD(P)-binding domain"/>
    <property type="match status" value="1"/>
</dbReference>
<dbReference type="SUPFAM" id="SSF53335">
    <property type="entry name" value="S-adenosyl-L-methionine-dependent methyltransferases"/>
    <property type="match status" value="1"/>
</dbReference>
<gene>
    <name evidence="1" type="primary">mnmC</name>
    <name type="ordered locus">YPDSF_2004</name>
</gene>